<evidence type="ECO:0000250" key="1"/>
<evidence type="ECO:0000255" key="2">
    <source>
        <dbReference type="HAMAP-Rule" id="MF_00118"/>
    </source>
</evidence>
<name>EFTU_PELPB</name>
<comment type="function">
    <text evidence="2">GTP hydrolase that promotes the GTP-dependent binding of aminoacyl-tRNA to the A-site of ribosomes during protein biosynthesis.</text>
</comment>
<comment type="catalytic activity">
    <reaction evidence="2">
        <text>GTP + H2O = GDP + phosphate + H(+)</text>
        <dbReference type="Rhea" id="RHEA:19669"/>
        <dbReference type="ChEBI" id="CHEBI:15377"/>
        <dbReference type="ChEBI" id="CHEBI:15378"/>
        <dbReference type="ChEBI" id="CHEBI:37565"/>
        <dbReference type="ChEBI" id="CHEBI:43474"/>
        <dbReference type="ChEBI" id="CHEBI:58189"/>
        <dbReference type="EC" id="3.6.5.3"/>
    </reaction>
    <physiologicalReaction direction="left-to-right" evidence="2">
        <dbReference type="Rhea" id="RHEA:19670"/>
    </physiologicalReaction>
</comment>
<comment type="subunit">
    <text evidence="2">Monomer.</text>
</comment>
<comment type="subcellular location">
    <subcellularLocation>
        <location evidence="2">Cytoplasm</location>
    </subcellularLocation>
</comment>
<comment type="similarity">
    <text evidence="2">Belongs to the TRAFAC class translation factor GTPase superfamily. Classic translation factor GTPase family. EF-Tu/EF-1A subfamily.</text>
</comment>
<gene>
    <name evidence="2" type="primary">tuf</name>
    <name type="ordered locus">Ppha_0287</name>
</gene>
<proteinExistence type="inferred from homology"/>
<feature type="chain" id="PRO_1000095085" description="Elongation factor Tu">
    <location>
        <begin position="1"/>
        <end position="393"/>
    </location>
</feature>
<feature type="domain" description="tr-type G">
    <location>
        <begin position="10"/>
        <end position="203"/>
    </location>
</feature>
<feature type="region of interest" description="G1" evidence="1">
    <location>
        <begin position="19"/>
        <end position="26"/>
    </location>
</feature>
<feature type="region of interest" description="G2" evidence="1">
    <location>
        <begin position="60"/>
        <end position="64"/>
    </location>
</feature>
<feature type="region of interest" description="G3" evidence="1">
    <location>
        <begin position="81"/>
        <end position="84"/>
    </location>
</feature>
<feature type="region of interest" description="G4" evidence="1">
    <location>
        <begin position="136"/>
        <end position="139"/>
    </location>
</feature>
<feature type="region of interest" description="G5" evidence="1">
    <location>
        <begin position="173"/>
        <end position="175"/>
    </location>
</feature>
<feature type="binding site" evidence="2">
    <location>
        <begin position="19"/>
        <end position="26"/>
    </location>
    <ligand>
        <name>GTP</name>
        <dbReference type="ChEBI" id="CHEBI:37565"/>
    </ligand>
</feature>
<feature type="binding site" evidence="2">
    <location>
        <position position="26"/>
    </location>
    <ligand>
        <name>Mg(2+)</name>
        <dbReference type="ChEBI" id="CHEBI:18420"/>
    </ligand>
</feature>
<feature type="binding site" evidence="2">
    <location>
        <begin position="81"/>
        <end position="85"/>
    </location>
    <ligand>
        <name>GTP</name>
        <dbReference type="ChEBI" id="CHEBI:37565"/>
    </ligand>
</feature>
<feature type="binding site" evidence="2">
    <location>
        <begin position="136"/>
        <end position="139"/>
    </location>
    <ligand>
        <name>GTP</name>
        <dbReference type="ChEBI" id="CHEBI:37565"/>
    </ligand>
</feature>
<reference key="1">
    <citation type="submission" date="2008-06" db="EMBL/GenBank/DDBJ databases">
        <title>Complete sequence of Pelodictyon phaeoclathratiforme BU-1.</title>
        <authorList>
            <consortium name="US DOE Joint Genome Institute"/>
            <person name="Lucas S."/>
            <person name="Copeland A."/>
            <person name="Lapidus A."/>
            <person name="Glavina del Rio T."/>
            <person name="Dalin E."/>
            <person name="Tice H."/>
            <person name="Bruce D."/>
            <person name="Goodwin L."/>
            <person name="Pitluck S."/>
            <person name="Schmutz J."/>
            <person name="Larimer F."/>
            <person name="Land M."/>
            <person name="Hauser L."/>
            <person name="Kyrpides N."/>
            <person name="Mikhailova N."/>
            <person name="Liu Z."/>
            <person name="Li T."/>
            <person name="Zhao F."/>
            <person name="Overmann J."/>
            <person name="Bryant D.A."/>
            <person name="Richardson P."/>
        </authorList>
    </citation>
    <scope>NUCLEOTIDE SEQUENCE [LARGE SCALE GENOMIC DNA]</scope>
    <source>
        <strain>DSM 5477 / BU-1</strain>
    </source>
</reference>
<sequence>MAKESYKRDKPHVNIGTIGHVDHGKTTLTAAITSVLAKQGLAAARDFGSIDKAPEERERGITISTAHVEYQTKKRHYAHIDCPGHADYIKNMITGAAQMDGAILVVAGTDGPMPQTREHILLARQVNVPSLVVFLNKVDIADPELIELVELELRELLTQYNFPGDDIPIVKGSALKALEGDPEGEKAIMELMDAVDSFIPDPVRDIDKPFLMPVEDVFSISGRGTVGTGRIERGRIKINEEVEIVGLRPTRKSVVTGIEMFQKLLDEGQAGDNAGLLLRGVDKTELERGMVIAKPGTIKPHTKFKAEVYILKKEEGGRHTPFFNGYRPQFYFRTTDVTGSVTLPEGVEMVMPGDNLGVEVELLAPIAMDEGLRFAIREGGRTVGAGSVTTIIE</sequence>
<keyword id="KW-0963">Cytoplasm</keyword>
<keyword id="KW-0251">Elongation factor</keyword>
<keyword id="KW-0342">GTP-binding</keyword>
<keyword id="KW-0378">Hydrolase</keyword>
<keyword id="KW-0460">Magnesium</keyword>
<keyword id="KW-0479">Metal-binding</keyword>
<keyword id="KW-0547">Nucleotide-binding</keyword>
<keyword id="KW-0648">Protein biosynthesis</keyword>
<keyword id="KW-1185">Reference proteome</keyword>
<accession>B4SBU5</accession>
<organism>
    <name type="scientific">Pelodictyon phaeoclathratiforme (strain DSM 5477 / BU-1)</name>
    <dbReference type="NCBI Taxonomy" id="324925"/>
    <lineage>
        <taxon>Bacteria</taxon>
        <taxon>Pseudomonadati</taxon>
        <taxon>Chlorobiota</taxon>
        <taxon>Chlorobiia</taxon>
        <taxon>Chlorobiales</taxon>
        <taxon>Chlorobiaceae</taxon>
        <taxon>Chlorobium/Pelodictyon group</taxon>
        <taxon>Pelodictyon</taxon>
    </lineage>
</organism>
<protein>
    <recommendedName>
        <fullName evidence="2">Elongation factor Tu</fullName>
        <shortName evidence="2">EF-Tu</shortName>
        <ecNumber evidence="2">3.6.5.3</ecNumber>
    </recommendedName>
</protein>
<dbReference type="EC" id="3.6.5.3" evidence="2"/>
<dbReference type="EMBL" id="CP001110">
    <property type="protein sequence ID" value="ACF42620.1"/>
    <property type="molecule type" value="Genomic_DNA"/>
</dbReference>
<dbReference type="RefSeq" id="WP_012507116.1">
    <property type="nucleotide sequence ID" value="NC_011060.1"/>
</dbReference>
<dbReference type="SMR" id="B4SBU5"/>
<dbReference type="STRING" id="324925.Ppha_0287"/>
<dbReference type="KEGG" id="pph:Ppha_0287"/>
<dbReference type="eggNOG" id="COG0050">
    <property type="taxonomic scope" value="Bacteria"/>
</dbReference>
<dbReference type="HOGENOM" id="CLU_007265_0_1_10"/>
<dbReference type="OrthoDB" id="9804504at2"/>
<dbReference type="Proteomes" id="UP000002724">
    <property type="component" value="Chromosome"/>
</dbReference>
<dbReference type="GO" id="GO:0005829">
    <property type="term" value="C:cytosol"/>
    <property type="evidence" value="ECO:0007669"/>
    <property type="project" value="TreeGrafter"/>
</dbReference>
<dbReference type="GO" id="GO:0005525">
    <property type="term" value="F:GTP binding"/>
    <property type="evidence" value="ECO:0007669"/>
    <property type="project" value="UniProtKB-UniRule"/>
</dbReference>
<dbReference type="GO" id="GO:0003924">
    <property type="term" value="F:GTPase activity"/>
    <property type="evidence" value="ECO:0007669"/>
    <property type="project" value="InterPro"/>
</dbReference>
<dbReference type="GO" id="GO:0003746">
    <property type="term" value="F:translation elongation factor activity"/>
    <property type="evidence" value="ECO:0007669"/>
    <property type="project" value="UniProtKB-UniRule"/>
</dbReference>
<dbReference type="CDD" id="cd01884">
    <property type="entry name" value="EF_Tu"/>
    <property type="match status" value="1"/>
</dbReference>
<dbReference type="CDD" id="cd03697">
    <property type="entry name" value="EFTU_II"/>
    <property type="match status" value="1"/>
</dbReference>
<dbReference type="CDD" id="cd03707">
    <property type="entry name" value="EFTU_III"/>
    <property type="match status" value="1"/>
</dbReference>
<dbReference type="FunFam" id="2.40.30.10:FF:000001">
    <property type="entry name" value="Elongation factor Tu"/>
    <property type="match status" value="1"/>
</dbReference>
<dbReference type="FunFam" id="3.40.50.300:FF:000003">
    <property type="entry name" value="Elongation factor Tu"/>
    <property type="match status" value="1"/>
</dbReference>
<dbReference type="Gene3D" id="3.40.50.300">
    <property type="entry name" value="P-loop containing nucleotide triphosphate hydrolases"/>
    <property type="match status" value="1"/>
</dbReference>
<dbReference type="Gene3D" id="2.40.30.10">
    <property type="entry name" value="Translation factors"/>
    <property type="match status" value="2"/>
</dbReference>
<dbReference type="HAMAP" id="MF_00118_B">
    <property type="entry name" value="EF_Tu_B"/>
    <property type="match status" value="1"/>
</dbReference>
<dbReference type="InterPro" id="IPR041709">
    <property type="entry name" value="EF-Tu_GTP-bd"/>
</dbReference>
<dbReference type="InterPro" id="IPR050055">
    <property type="entry name" value="EF-Tu_GTPase"/>
</dbReference>
<dbReference type="InterPro" id="IPR004161">
    <property type="entry name" value="EFTu-like_2"/>
</dbReference>
<dbReference type="InterPro" id="IPR033720">
    <property type="entry name" value="EFTU_2"/>
</dbReference>
<dbReference type="InterPro" id="IPR031157">
    <property type="entry name" value="G_TR_CS"/>
</dbReference>
<dbReference type="InterPro" id="IPR027417">
    <property type="entry name" value="P-loop_NTPase"/>
</dbReference>
<dbReference type="InterPro" id="IPR005225">
    <property type="entry name" value="Small_GTP-bd"/>
</dbReference>
<dbReference type="InterPro" id="IPR000795">
    <property type="entry name" value="T_Tr_GTP-bd_dom"/>
</dbReference>
<dbReference type="InterPro" id="IPR009000">
    <property type="entry name" value="Transl_B-barrel_sf"/>
</dbReference>
<dbReference type="InterPro" id="IPR009001">
    <property type="entry name" value="Transl_elong_EF1A/Init_IF2_C"/>
</dbReference>
<dbReference type="InterPro" id="IPR004541">
    <property type="entry name" value="Transl_elong_EFTu/EF1A_bac/org"/>
</dbReference>
<dbReference type="InterPro" id="IPR004160">
    <property type="entry name" value="Transl_elong_EFTu/EF1A_C"/>
</dbReference>
<dbReference type="NCBIfam" id="TIGR00485">
    <property type="entry name" value="EF-Tu"/>
    <property type="match status" value="1"/>
</dbReference>
<dbReference type="NCBIfam" id="NF000766">
    <property type="entry name" value="PRK00049.1"/>
    <property type="match status" value="1"/>
</dbReference>
<dbReference type="NCBIfam" id="NF009372">
    <property type="entry name" value="PRK12735.1"/>
    <property type="match status" value="1"/>
</dbReference>
<dbReference type="NCBIfam" id="NF009373">
    <property type="entry name" value="PRK12736.1"/>
    <property type="match status" value="1"/>
</dbReference>
<dbReference type="NCBIfam" id="TIGR00231">
    <property type="entry name" value="small_GTP"/>
    <property type="match status" value="1"/>
</dbReference>
<dbReference type="PANTHER" id="PTHR43721:SF22">
    <property type="entry name" value="ELONGATION FACTOR TU, MITOCHONDRIAL"/>
    <property type="match status" value="1"/>
</dbReference>
<dbReference type="PANTHER" id="PTHR43721">
    <property type="entry name" value="ELONGATION FACTOR TU-RELATED"/>
    <property type="match status" value="1"/>
</dbReference>
<dbReference type="Pfam" id="PF00009">
    <property type="entry name" value="GTP_EFTU"/>
    <property type="match status" value="1"/>
</dbReference>
<dbReference type="Pfam" id="PF03144">
    <property type="entry name" value="GTP_EFTU_D2"/>
    <property type="match status" value="1"/>
</dbReference>
<dbReference type="Pfam" id="PF03143">
    <property type="entry name" value="GTP_EFTU_D3"/>
    <property type="match status" value="1"/>
</dbReference>
<dbReference type="PRINTS" id="PR00315">
    <property type="entry name" value="ELONGATNFCT"/>
</dbReference>
<dbReference type="SUPFAM" id="SSF50465">
    <property type="entry name" value="EF-Tu/eEF-1alpha/eIF2-gamma C-terminal domain"/>
    <property type="match status" value="1"/>
</dbReference>
<dbReference type="SUPFAM" id="SSF52540">
    <property type="entry name" value="P-loop containing nucleoside triphosphate hydrolases"/>
    <property type="match status" value="1"/>
</dbReference>
<dbReference type="SUPFAM" id="SSF50447">
    <property type="entry name" value="Translation proteins"/>
    <property type="match status" value="1"/>
</dbReference>
<dbReference type="PROSITE" id="PS00301">
    <property type="entry name" value="G_TR_1"/>
    <property type="match status" value="1"/>
</dbReference>
<dbReference type="PROSITE" id="PS51722">
    <property type="entry name" value="G_TR_2"/>
    <property type="match status" value="1"/>
</dbReference>